<gene>
    <name type="primary">Eya4</name>
</gene>
<organism>
    <name type="scientific">Mus musculus</name>
    <name type="common">Mouse</name>
    <dbReference type="NCBI Taxonomy" id="10090"/>
    <lineage>
        <taxon>Eukaryota</taxon>
        <taxon>Metazoa</taxon>
        <taxon>Chordata</taxon>
        <taxon>Craniata</taxon>
        <taxon>Vertebrata</taxon>
        <taxon>Euteleostomi</taxon>
        <taxon>Mammalia</taxon>
        <taxon>Eutheria</taxon>
        <taxon>Euarchontoglires</taxon>
        <taxon>Glires</taxon>
        <taxon>Rodentia</taxon>
        <taxon>Myomorpha</taxon>
        <taxon>Muroidea</taxon>
        <taxon>Muridae</taxon>
        <taxon>Murinae</taxon>
        <taxon>Mus</taxon>
        <taxon>Mus</taxon>
    </lineage>
</organism>
<proteinExistence type="evidence at transcript level"/>
<accession>Q9Z191</accession>
<accession>Q0VAV8</accession>
<keyword id="KW-0007">Acetylation</keyword>
<keyword id="KW-0010">Activator</keyword>
<keyword id="KW-0156">Chromatin regulator</keyword>
<keyword id="KW-0963">Cytoplasm</keyword>
<keyword id="KW-0217">Developmental protein</keyword>
<keyword id="KW-0227">DNA damage</keyword>
<keyword id="KW-0234">DNA repair</keyword>
<keyword id="KW-0378">Hydrolase</keyword>
<keyword id="KW-1017">Isopeptide bond</keyword>
<keyword id="KW-0460">Magnesium</keyword>
<keyword id="KW-0479">Metal-binding</keyword>
<keyword id="KW-0539">Nucleus</keyword>
<keyword id="KW-0597">Phosphoprotein</keyword>
<keyword id="KW-0904">Protein phosphatase</keyword>
<keyword id="KW-1185">Reference proteome</keyword>
<keyword id="KW-0804">Transcription</keyword>
<keyword id="KW-0805">Transcription regulation</keyword>
<keyword id="KW-0832">Ubl conjugation</keyword>
<reference key="1">
    <citation type="journal article" date="1999" name="Hum. Mol. Genet.">
        <title>EYA4, a novel vertebrate gene related to Drosophila eyes absent.</title>
        <authorList>
            <person name="Borsani G."/>
            <person name="DeGrandi A."/>
            <person name="Ballabio A."/>
            <person name="Bulfone A."/>
            <person name="Bernard L."/>
            <person name="Banfi S."/>
            <person name="Gattuso C."/>
            <person name="Mariani M."/>
            <person name="Dixon M."/>
            <person name="Donnai D."/>
            <person name="Metcalfe K."/>
            <person name="Winter R."/>
            <person name="Robertson M."/>
            <person name="Axton R."/>
            <person name="Brown A."/>
            <person name="van Heyningen V."/>
            <person name="Hanson I."/>
        </authorList>
    </citation>
    <scope>NUCLEOTIDE SEQUENCE [MRNA]</scope>
    <scope>TISSUE SPECIFICITY</scope>
    <source>
        <tissue>Embryo</tissue>
    </source>
</reference>
<reference key="2">
    <citation type="submission" date="2005-07" db="EMBL/GenBank/DDBJ databases">
        <authorList>
            <person name="Mural R.J."/>
            <person name="Adams M.D."/>
            <person name="Myers E.W."/>
            <person name="Smith H.O."/>
            <person name="Venter J.C."/>
        </authorList>
    </citation>
    <scope>NUCLEOTIDE SEQUENCE [LARGE SCALE GENOMIC DNA]</scope>
</reference>
<reference key="3">
    <citation type="journal article" date="2004" name="Genome Res.">
        <title>The status, quality, and expansion of the NIH full-length cDNA project: the Mammalian Gene Collection (MGC).</title>
        <authorList>
            <consortium name="The MGC Project Team"/>
        </authorList>
    </citation>
    <scope>NUCLEOTIDE SEQUENCE [LARGE SCALE MRNA]</scope>
</reference>
<feature type="chain" id="PRO_0000218652" description="Protein phosphatase EYA4">
    <location>
        <begin position="1"/>
        <end position="616"/>
    </location>
</feature>
<feature type="region of interest" description="Disordered" evidence="4">
    <location>
        <begin position="1"/>
        <end position="66"/>
    </location>
</feature>
<feature type="region of interest" description="Disordered" evidence="4">
    <location>
        <begin position="186"/>
        <end position="211"/>
    </location>
</feature>
<feature type="region of interest" description="Disordered" evidence="4">
    <location>
        <begin position="277"/>
        <end position="345"/>
    </location>
</feature>
<feature type="compositionally biased region" description="Low complexity" evidence="4">
    <location>
        <begin position="56"/>
        <end position="66"/>
    </location>
</feature>
<feature type="compositionally biased region" description="Polar residues" evidence="4">
    <location>
        <begin position="277"/>
        <end position="311"/>
    </location>
</feature>
<feature type="active site" description="Nucleophile" evidence="1">
    <location>
        <position position="352"/>
    </location>
</feature>
<feature type="active site" description="Proton donor" evidence="1">
    <location>
        <position position="354"/>
    </location>
</feature>
<feature type="binding site" evidence="1">
    <location>
        <position position="352"/>
    </location>
    <ligand>
        <name>Mg(2+)</name>
        <dbReference type="ChEBI" id="CHEBI:18420"/>
    </ligand>
</feature>
<feature type="binding site" evidence="1">
    <location>
        <position position="354"/>
    </location>
    <ligand>
        <name>Mg(2+)</name>
        <dbReference type="ChEBI" id="CHEBI:18420"/>
    </ligand>
</feature>
<feature type="binding site" evidence="1">
    <location>
        <position position="580"/>
    </location>
    <ligand>
        <name>Mg(2+)</name>
        <dbReference type="ChEBI" id="CHEBI:18420"/>
    </ligand>
</feature>
<feature type="modified residue" description="N-acetylmethionine" evidence="2">
    <location>
        <position position="1"/>
    </location>
</feature>
<feature type="modified residue" description="Phosphoserine" evidence="2">
    <location>
        <position position="338"/>
    </location>
</feature>
<feature type="cross-link" description="Glycyl lysine isopeptide (Lys-Gly) (interchain with G-Cter in SUMO2)" evidence="2">
    <location>
        <position position="14"/>
    </location>
</feature>
<feature type="cross-link" description="Glycyl lysine isopeptide (Lys-Gly) (interchain with G-Cter in SUMO2)" evidence="2">
    <location>
        <position position="52"/>
    </location>
</feature>
<feature type="sequence conflict" description="In Ref. 1; CAA76637." evidence="6" ref="1">
    <original>P</original>
    <variation>L</variation>
    <location>
        <position position="337"/>
    </location>
</feature>
<dbReference type="EC" id="3.1.3.48" evidence="3"/>
<dbReference type="EMBL" id="Y17115">
    <property type="protein sequence ID" value="CAA76637.1"/>
    <property type="molecule type" value="mRNA"/>
</dbReference>
<dbReference type="EMBL" id="AJ007997">
    <property type="protein sequence ID" value="CAA07820.1"/>
    <property type="molecule type" value="mRNA"/>
</dbReference>
<dbReference type="EMBL" id="CH466540">
    <property type="protein sequence ID" value="EDL04766.1"/>
    <property type="molecule type" value="Genomic_DNA"/>
</dbReference>
<dbReference type="EMBL" id="BC120899">
    <property type="protein sequence ID" value="AAI20900.1"/>
    <property type="molecule type" value="mRNA"/>
</dbReference>
<dbReference type="CCDS" id="CCDS83687.1"/>
<dbReference type="RefSeq" id="NP_001334301.1">
    <property type="nucleotide sequence ID" value="NM_001347372.2"/>
</dbReference>
<dbReference type="RefSeq" id="XP_006512586.1">
    <property type="nucleotide sequence ID" value="XM_006512523.3"/>
</dbReference>
<dbReference type="RefSeq" id="XP_006512587.1">
    <property type="nucleotide sequence ID" value="XM_006512524.3"/>
</dbReference>
<dbReference type="SMR" id="Q9Z191"/>
<dbReference type="BioGRID" id="199562">
    <property type="interactions" value="2"/>
</dbReference>
<dbReference type="FunCoup" id="Q9Z191">
    <property type="interactions" value="1336"/>
</dbReference>
<dbReference type="MINT" id="Q9Z191"/>
<dbReference type="STRING" id="10090.ENSMUSP00000090335"/>
<dbReference type="GlyGen" id="Q9Z191">
    <property type="glycosylation" value="1 site, 1 O-linked glycan (1 site)"/>
</dbReference>
<dbReference type="iPTMnet" id="Q9Z191"/>
<dbReference type="PhosphoSitePlus" id="Q9Z191"/>
<dbReference type="PaxDb" id="10090-ENSMUSP00000090335"/>
<dbReference type="PeptideAtlas" id="Q9Z191"/>
<dbReference type="ProteomicsDB" id="275562"/>
<dbReference type="Pumba" id="Q9Z191"/>
<dbReference type="Antibodypedia" id="32953">
    <property type="antibodies" value="223 antibodies from 30 providers"/>
</dbReference>
<dbReference type="DNASU" id="14051"/>
<dbReference type="Ensembl" id="ENSMUST00000220299.2">
    <property type="protein sequence ID" value="ENSMUSP00000151287.2"/>
    <property type="gene ID" value="ENSMUSG00000010461.17"/>
</dbReference>
<dbReference type="GeneID" id="14051"/>
<dbReference type="KEGG" id="mmu:14051"/>
<dbReference type="UCSC" id="uc007epu.1">
    <property type="organism name" value="mouse"/>
</dbReference>
<dbReference type="AGR" id="MGI:1337104"/>
<dbReference type="CTD" id="2070"/>
<dbReference type="MGI" id="MGI:1337104">
    <property type="gene designation" value="Eya4"/>
</dbReference>
<dbReference type="VEuPathDB" id="HostDB:ENSMUSG00000010461"/>
<dbReference type="eggNOG" id="KOG3107">
    <property type="taxonomic scope" value="Eukaryota"/>
</dbReference>
<dbReference type="GeneTree" id="ENSGT00950000182978"/>
<dbReference type="InParanoid" id="Q9Z191"/>
<dbReference type="OrthoDB" id="167668at2759"/>
<dbReference type="PhylomeDB" id="Q9Z191"/>
<dbReference type="Reactome" id="R-MMU-5693565">
    <property type="pathway name" value="Recruitment and ATM-mediated phosphorylation of repair and signaling proteins at DNA double strand breaks"/>
</dbReference>
<dbReference type="BioGRID-ORCS" id="14051">
    <property type="hits" value="2 hits in 112 CRISPR screens"/>
</dbReference>
<dbReference type="ChiTaRS" id="Eya4">
    <property type="organism name" value="mouse"/>
</dbReference>
<dbReference type="PRO" id="PR:Q9Z191"/>
<dbReference type="Proteomes" id="UP000000589">
    <property type="component" value="Chromosome 10"/>
</dbReference>
<dbReference type="RNAct" id="Q9Z191">
    <property type="molecule type" value="protein"/>
</dbReference>
<dbReference type="Bgee" id="ENSMUSG00000010461">
    <property type="expression patterns" value="Expressed in epithelium of cochlear duct and 196 other cell types or tissues"/>
</dbReference>
<dbReference type="ExpressionAtlas" id="Q9Z191">
    <property type="expression patterns" value="baseline and differential"/>
</dbReference>
<dbReference type="GO" id="GO:0005737">
    <property type="term" value="C:cytoplasm"/>
    <property type="evidence" value="ECO:0007669"/>
    <property type="project" value="UniProtKB-SubCell"/>
</dbReference>
<dbReference type="GO" id="GO:0005634">
    <property type="term" value="C:nucleus"/>
    <property type="evidence" value="ECO:0007669"/>
    <property type="project" value="UniProtKB-SubCell"/>
</dbReference>
<dbReference type="GO" id="GO:0046872">
    <property type="term" value="F:metal ion binding"/>
    <property type="evidence" value="ECO:0007669"/>
    <property type="project" value="UniProtKB-KW"/>
</dbReference>
<dbReference type="GO" id="GO:0004725">
    <property type="term" value="F:protein tyrosine phosphatase activity"/>
    <property type="evidence" value="ECO:0007669"/>
    <property type="project" value="UniProtKB-EC"/>
</dbReference>
<dbReference type="GO" id="GO:0006325">
    <property type="term" value="P:chromatin organization"/>
    <property type="evidence" value="ECO:0007669"/>
    <property type="project" value="UniProtKB-KW"/>
</dbReference>
<dbReference type="GO" id="GO:0006281">
    <property type="term" value="P:DNA repair"/>
    <property type="evidence" value="ECO:0007669"/>
    <property type="project" value="UniProtKB-KW"/>
</dbReference>
<dbReference type="GO" id="GO:0042474">
    <property type="term" value="P:middle ear morphogenesis"/>
    <property type="evidence" value="ECO:0000315"/>
    <property type="project" value="MGI"/>
</dbReference>
<dbReference type="GO" id="GO:0007605">
    <property type="term" value="P:sensory perception of sound"/>
    <property type="evidence" value="ECO:0000315"/>
    <property type="project" value="MGI"/>
</dbReference>
<dbReference type="CDD" id="cd02601">
    <property type="entry name" value="HAD_Eya"/>
    <property type="match status" value="1"/>
</dbReference>
<dbReference type="FunFam" id="3.40.50.12350:FF:000001">
    <property type="entry name" value="Eyes absent homolog"/>
    <property type="match status" value="1"/>
</dbReference>
<dbReference type="Gene3D" id="3.40.50.12350">
    <property type="match status" value="1"/>
</dbReference>
<dbReference type="InterPro" id="IPR028472">
    <property type="entry name" value="EYA"/>
</dbReference>
<dbReference type="InterPro" id="IPR006545">
    <property type="entry name" value="EYA_dom"/>
</dbReference>
<dbReference type="InterPro" id="IPR042577">
    <property type="entry name" value="EYA_dom_metazoan"/>
</dbReference>
<dbReference type="InterPro" id="IPR038102">
    <property type="entry name" value="EYA_dom_sf"/>
</dbReference>
<dbReference type="NCBIfam" id="TIGR01658">
    <property type="entry name" value="EYA-cons_domain"/>
    <property type="match status" value="1"/>
</dbReference>
<dbReference type="PANTHER" id="PTHR10190">
    <property type="entry name" value="EYES ABSENT"/>
    <property type="match status" value="1"/>
</dbReference>
<dbReference type="PANTHER" id="PTHR10190:SF17">
    <property type="entry name" value="EYES ABSENT HOMOLOG 4"/>
    <property type="match status" value="1"/>
</dbReference>
<dbReference type="Pfam" id="PF00702">
    <property type="entry name" value="Hydrolase"/>
    <property type="match status" value="1"/>
</dbReference>
<dbReference type="SFLD" id="SFLDG01129">
    <property type="entry name" value="C1.5:_HAD__Beta-PGM__Phosphata"/>
    <property type="match status" value="1"/>
</dbReference>
<dbReference type="SFLD" id="SFLDS00003">
    <property type="entry name" value="Haloacid_Dehalogenase"/>
    <property type="match status" value="1"/>
</dbReference>
<sequence length="616" mass="66875">MEDTQDLNEQSVKKTCPEADVSEPQNSRSMEMQDLASPHALVGGSDTPGSSKLDKSGLSSTSVTTNGTGVSLLAVKTEPLHSSESTTTTGDGALDTFTGSVITSSGYSPRSAQQYSPQLYPSKPYPHILSTPAAQTMSAYAGQTQYSGMQQPAVYTAYSQTGQPYSLPAYDLGVMLPAIKTESGLSQTQSPLQSGCLSYSPGFSTPQPGQTPYSYQMPGSSFAPSSTIYANNSVSNSTNFSSSQQDYPSYTAFGQNQYAQYYSASTYGAYMTSNNTADGTSSSTSTYQLQESLQGLTSQPGEFDTVQSPSTPIKDLDDRTCRSSGSKSRGRGRKNNPSPPPDSDLERVFVWDLDETIIVFHSLLTGSYAQKYGKDPPMAVTLGLRMEEMIFNLADTHLFFNDLEECDQVHIDDVSSDDNGQDLSTYSFATDGFHAAASSANLCLPTGVRGGVDWMRKLAFRYRRVKELYNTYKNNVGGLLGPAKRDAWLQLRAEIEGLTDSWLTNALKSLSIISTRSNCVNVLVTTTQLIPALAKVLLYSLGGAFPIENIYSATKIGKESCFERIVSRFGTNITYVVIGDGRDEEHAANQHNMPFWRISSHSDLLALHQALELEYL</sequence>
<evidence type="ECO:0000250" key="1">
    <source>
        <dbReference type="UniProtKB" id="O00167"/>
    </source>
</evidence>
<evidence type="ECO:0000250" key="2">
    <source>
        <dbReference type="UniProtKB" id="O95677"/>
    </source>
</evidence>
<evidence type="ECO:0000250" key="3">
    <source>
        <dbReference type="UniProtKB" id="Q99502"/>
    </source>
</evidence>
<evidence type="ECO:0000256" key="4">
    <source>
        <dbReference type="SAM" id="MobiDB-lite"/>
    </source>
</evidence>
<evidence type="ECO:0000269" key="5">
    <source>
    </source>
</evidence>
<evidence type="ECO:0000305" key="6"/>
<protein>
    <recommendedName>
        <fullName evidence="6">Protein phosphatase EYA4</fullName>
        <ecNumber evidence="3">3.1.3.48</ecNumber>
    </recommendedName>
    <alternativeName>
        <fullName>Eyes absent homolog 4</fullName>
    </alternativeName>
</protein>
<name>EYA4_MOUSE</name>
<comment type="function">
    <text evidence="3">Tyrosine phosphatase that specifically dephosphorylates 'Tyr-142' of histone H2AX (H2AXY142ph). 'Tyr-142' phosphorylation of histone H2AX plays a central role in DNA repair and acts as a mark that distinguishes between apoptotic and repair responses to genotoxic stress. Promotes efficient DNA repair by dephosphorylating H2AX, promoting the recruitment of DNA repair complexes containing MDC1. Its function as histone phosphatase probably explains its role in transcription regulation during organogenesis. May be involved in development of the eye (By similarity).</text>
</comment>
<comment type="catalytic activity">
    <reaction evidence="3">
        <text>O-phospho-L-tyrosyl-[protein] + H2O = L-tyrosyl-[protein] + phosphate</text>
        <dbReference type="Rhea" id="RHEA:10684"/>
        <dbReference type="Rhea" id="RHEA-COMP:10136"/>
        <dbReference type="Rhea" id="RHEA-COMP:20101"/>
        <dbReference type="ChEBI" id="CHEBI:15377"/>
        <dbReference type="ChEBI" id="CHEBI:43474"/>
        <dbReference type="ChEBI" id="CHEBI:46858"/>
        <dbReference type="ChEBI" id="CHEBI:61978"/>
        <dbReference type="EC" id="3.1.3.48"/>
    </reaction>
</comment>
<comment type="cofactor">
    <cofactor evidence="1">
        <name>Mg(2+)</name>
        <dbReference type="ChEBI" id="CHEBI:18420"/>
    </cofactor>
    <text evidence="1">Binds 1 Mg(2+) ion per subunit.</text>
</comment>
<comment type="subunit">
    <text evidence="2">Interacts with SIX3; translocates EYA4 from the cytoplasm to the nucleus and promotes activation of their target genes.</text>
</comment>
<comment type="subcellular location">
    <subcellularLocation>
        <location evidence="3">Cytoplasm</location>
    </subcellularLocation>
    <subcellularLocation>
        <location evidence="3">Nucleus</location>
    </subcellularLocation>
</comment>
<comment type="tissue specificity">
    <text evidence="5">In the embryo, expressed mainly in the craniofacial mesenchyme, dermamyotome and limb.</text>
</comment>
<comment type="similarity">
    <text evidence="6">Belongs to the HAD-like hydrolase superfamily. EYA family.</text>
</comment>